<protein>
    <recommendedName>
        <fullName>Imidazole glycerol phosphate synthase subunit HisH</fullName>
        <ecNumber>4.3.2.10</ecNumber>
    </recommendedName>
    <alternativeName>
        <fullName>IGP synthase glutaminase subunit</fullName>
        <ecNumber>3.5.1.2</ecNumber>
    </alternativeName>
    <alternativeName>
        <fullName>IGP synthase subunit HisH</fullName>
    </alternativeName>
    <alternativeName>
        <fullName>ImGP synthase subunit HisH</fullName>
        <shortName>IGPS subunit HisH</shortName>
    </alternativeName>
</protein>
<organism>
    <name type="scientific">Azospirillum brasilense</name>
    <dbReference type="NCBI Taxonomy" id="192"/>
    <lineage>
        <taxon>Bacteria</taxon>
        <taxon>Pseudomonadati</taxon>
        <taxon>Pseudomonadota</taxon>
        <taxon>Alphaproteobacteria</taxon>
        <taxon>Rhodospirillales</taxon>
        <taxon>Azospirillaceae</taxon>
        <taxon>Azospirillum</taxon>
    </lineage>
</organism>
<keyword id="KW-0028">Amino-acid biosynthesis</keyword>
<keyword id="KW-0963">Cytoplasm</keyword>
<keyword id="KW-0315">Glutamine amidotransferase</keyword>
<keyword id="KW-0368">Histidine biosynthesis</keyword>
<keyword id="KW-0378">Hydrolase</keyword>
<keyword id="KW-0456">Lyase</keyword>
<gene>
    <name type="primary">hisH</name>
</gene>
<reference key="1">
    <citation type="journal article" date="1989" name="Mol. Gen. Genet.">
        <title>Cloning of histidine genes of Azospirillum brasilense: organization of the ABFH gene cluster and nucleotide sequence of the hisB gene.</title>
        <authorList>
            <person name="Fani R."/>
            <person name="Bazzicalupo M."/>
            <person name="Damiani G."/>
            <person name="Bianchi A."/>
            <person name="Schipani C."/>
            <person name="Sgaramella V."/>
            <person name="Polsinelli M."/>
        </authorList>
    </citation>
    <scope>NUCLEOTIDE SEQUENCE [GENOMIC DNA]</scope>
    <source>
        <strain>Sp6</strain>
    </source>
</reference>
<sequence>METVALIDYGSGNLRSPAKALERAAAGCHASFQVLVTSDADAVRKADRVVLPAVGAFADCKRGLSEVPGMQLMAEGGREYGVTEGLGWIKGEVVKLEPADPTLKIPHMGWNELDIRREHPVLAGLRERAHAYFVHSYRFAVERPEDVIASADYGGPFAAVVGRDNLVGTQFHPEKSQETGLALVANFLTWRV</sequence>
<evidence type="ECO:0000250" key="1"/>
<evidence type="ECO:0000305" key="2"/>
<proteinExistence type="inferred from homology"/>
<dbReference type="EC" id="4.3.2.10"/>
<dbReference type="EC" id="3.5.1.2"/>
<dbReference type="EMBL" id="X17435">
    <property type="protein sequence ID" value="CAA35479.1"/>
    <property type="molecule type" value="Genomic_DNA"/>
</dbReference>
<dbReference type="EMBL" id="X61207">
    <property type="protein sequence ID" value="CAA43516.1"/>
    <property type="molecule type" value="Genomic_DNA"/>
</dbReference>
<dbReference type="PIR" id="S16799">
    <property type="entry name" value="PE0007"/>
</dbReference>
<dbReference type="SMR" id="P18785"/>
<dbReference type="UniPathway" id="UPA00031">
    <property type="reaction ID" value="UER00010"/>
</dbReference>
<dbReference type="GO" id="GO:0005737">
    <property type="term" value="C:cytoplasm"/>
    <property type="evidence" value="ECO:0007669"/>
    <property type="project" value="UniProtKB-SubCell"/>
</dbReference>
<dbReference type="GO" id="GO:0004359">
    <property type="term" value="F:glutaminase activity"/>
    <property type="evidence" value="ECO:0007669"/>
    <property type="project" value="UniProtKB-EC"/>
</dbReference>
<dbReference type="GO" id="GO:0000107">
    <property type="term" value="F:imidazoleglycerol-phosphate synthase activity"/>
    <property type="evidence" value="ECO:0007669"/>
    <property type="project" value="UniProtKB-UniRule"/>
</dbReference>
<dbReference type="GO" id="GO:0016829">
    <property type="term" value="F:lyase activity"/>
    <property type="evidence" value="ECO:0007669"/>
    <property type="project" value="UniProtKB-KW"/>
</dbReference>
<dbReference type="GO" id="GO:0000105">
    <property type="term" value="P:L-histidine biosynthetic process"/>
    <property type="evidence" value="ECO:0007669"/>
    <property type="project" value="UniProtKB-UniRule"/>
</dbReference>
<dbReference type="CDD" id="cd01748">
    <property type="entry name" value="GATase1_IGP_Synthase"/>
    <property type="match status" value="1"/>
</dbReference>
<dbReference type="Gene3D" id="3.40.50.880">
    <property type="match status" value="2"/>
</dbReference>
<dbReference type="HAMAP" id="MF_00278">
    <property type="entry name" value="HisH"/>
    <property type="match status" value="1"/>
</dbReference>
<dbReference type="InterPro" id="IPR029062">
    <property type="entry name" value="Class_I_gatase-like"/>
</dbReference>
<dbReference type="InterPro" id="IPR017926">
    <property type="entry name" value="GATASE"/>
</dbReference>
<dbReference type="InterPro" id="IPR010139">
    <property type="entry name" value="Imidazole-glycPsynth_HisH"/>
</dbReference>
<dbReference type="NCBIfam" id="TIGR01855">
    <property type="entry name" value="IMP_synth_hisH"/>
    <property type="match status" value="1"/>
</dbReference>
<dbReference type="PANTHER" id="PTHR42701">
    <property type="entry name" value="IMIDAZOLE GLYCEROL PHOSPHATE SYNTHASE SUBUNIT HISH"/>
    <property type="match status" value="1"/>
</dbReference>
<dbReference type="PANTHER" id="PTHR42701:SF1">
    <property type="entry name" value="IMIDAZOLE GLYCEROL PHOSPHATE SYNTHASE SUBUNIT HISH"/>
    <property type="match status" value="1"/>
</dbReference>
<dbReference type="Pfam" id="PF00117">
    <property type="entry name" value="GATase"/>
    <property type="match status" value="1"/>
</dbReference>
<dbReference type="PIRSF" id="PIRSF000495">
    <property type="entry name" value="Amidotransf_hisH"/>
    <property type="match status" value="1"/>
</dbReference>
<dbReference type="SUPFAM" id="SSF52317">
    <property type="entry name" value="Class I glutamine amidotransferase-like"/>
    <property type="match status" value="1"/>
</dbReference>
<dbReference type="PROSITE" id="PS51273">
    <property type="entry name" value="GATASE_TYPE_1"/>
    <property type="match status" value="1"/>
</dbReference>
<comment type="function">
    <text evidence="1">IGPS catalyzes the conversion of PRFAR and glutamine to IGP, AICAR and glutamate. The HisH subunit catalyzes the hydrolysis of glutamine to glutamate and ammonia as part of the synthesis of IGP and AICAR. The resulting ammonia molecule is channeled to the active site of HisF (By similarity).</text>
</comment>
<comment type="catalytic activity">
    <reaction>
        <text>5-[(5-phospho-1-deoxy-D-ribulos-1-ylimino)methylamino]-1-(5-phospho-beta-D-ribosyl)imidazole-4-carboxamide + L-glutamine = D-erythro-1-(imidazol-4-yl)glycerol 3-phosphate + 5-amino-1-(5-phospho-beta-D-ribosyl)imidazole-4-carboxamide + L-glutamate + H(+)</text>
        <dbReference type="Rhea" id="RHEA:24793"/>
        <dbReference type="ChEBI" id="CHEBI:15378"/>
        <dbReference type="ChEBI" id="CHEBI:29985"/>
        <dbReference type="ChEBI" id="CHEBI:58278"/>
        <dbReference type="ChEBI" id="CHEBI:58359"/>
        <dbReference type="ChEBI" id="CHEBI:58475"/>
        <dbReference type="ChEBI" id="CHEBI:58525"/>
        <dbReference type="EC" id="4.3.2.10"/>
    </reaction>
</comment>
<comment type="catalytic activity">
    <reaction>
        <text>L-glutamine + H2O = L-glutamate + NH4(+)</text>
        <dbReference type="Rhea" id="RHEA:15889"/>
        <dbReference type="ChEBI" id="CHEBI:15377"/>
        <dbReference type="ChEBI" id="CHEBI:28938"/>
        <dbReference type="ChEBI" id="CHEBI:29985"/>
        <dbReference type="ChEBI" id="CHEBI:58359"/>
        <dbReference type="EC" id="3.5.1.2"/>
    </reaction>
</comment>
<comment type="pathway">
    <text>Amino-acid biosynthesis; L-histidine biosynthesis; L-histidine from 5-phospho-alpha-D-ribose 1-diphosphate: step 5/9.</text>
</comment>
<comment type="subunit">
    <text evidence="1">Heterodimer of HisH and HisF.</text>
</comment>
<comment type="subcellular location">
    <subcellularLocation>
        <location evidence="1">Cytoplasm</location>
    </subcellularLocation>
</comment>
<comment type="caution">
    <text evidence="2">Compared to other HisH it lacks an internal segment that normally contains the Cys active site residue.</text>
</comment>
<feature type="chain" id="PRO_0000152336" description="Imidazole glycerol phosphate synthase subunit HisH">
    <location>
        <begin position="1"/>
        <end position="192"/>
    </location>
</feature>
<feature type="domain" description="Glutamine amidotransferase type-1">
    <location>
        <begin position="3"/>
        <end position="192"/>
    </location>
</feature>
<feature type="active site" evidence="1">
    <location>
        <position position="172"/>
    </location>
</feature>
<feature type="active site" evidence="1">
    <location>
        <position position="174"/>
    </location>
</feature>
<name>HIS5_AZOBR</name>
<accession>P18785</accession>